<keyword id="KW-0963">Cytoplasm</keyword>
<keyword id="KW-0256">Endoplasmic reticulum</keyword>
<keyword id="KW-1185">Reference proteome</keyword>
<keyword id="KW-0687">Ribonucleoprotein</keyword>
<keyword id="KW-0733">Signal recognition particle</keyword>
<accession>P49965</accession>
<evidence type="ECO:0000250" key="1">
    <source>
        <dbReference type="UniProtKB" id="O76094"/>
    </source>
</evidence>
<evidence type="ECO:0000250" key="2">
    <source>
        <dbReference type="UniProtKB" id="P38688"/>
    </source>
</evidence>
<evidence type="ECO:0000256" key="3">
    <source>
        <dbReference type="SAM" id="MobiDB-lite"/>
    </source>
</evidence>
<evidence type="ECO:0000305" key="4"/>
<protein>
    <recommendedName>
        <fullName>Signal recognition particle subunit SRP72</fullName>
        <shortName>SRP72</shortName>
    </recommendedName>
    <alternativeName>
        <fullName>Signal recognition particle 72 kDa protein</fullName>
    </alternativeName>
</protein>
<name>SRP72_SCHMA</name>
<organism>
    <name type="scientific">Schistosoma mansoni</name>
    <name type="common">Blood fluke</name>
    <dbReference type="NCBI Taxonomy" id="6183"/>
    <lineage>
        <taxon>Eukaryota</taxon>
        <taxon>Metazoa</taxon>
        <taxon>Spiralia</taxon>
        <taxon>Lophotrochozoa</taxon>
        <taxon>Platyhelminthes</taxon>
        <taxon>Trematoda</taxon>
        <taxon>Digenea</taxon>
        <taxon>Strigeidida</taxon>
        <taxon>Schistosomatoidea</taxon>
        <taxon>Schistosomatidae</taxon>
        <taxon>Schistosoma</taxon>
    </lineage>
</organism>
<sequence>MANEKAFNLQSAYSDLNKACSAQAYDKIINISGKILTKFPGETKAFQCKVVALIRAEKYEDCLSFLKKNPTLSSHVIFEKAYVEYRLNRLTEAAKTLESEEASDSKVQELKAQVLYRKGDFAGAYAYLRTVIRNSQDDYSEERLANLTAVAAAESCFNNANLDLDVNPQMYEGKFNLACYHLGRGDCYLASRSLDDAENTCNLCLSEDPELTEEERNEELAPIRVQRAYILQLNKEEEEANQVYQSVIRQRASDPALLAVAANNIVCINQDQNIFDSRKRIKMASTDGLQFKLFSRQRTDMLINQALFYWYTNQMEACTAKLRTVSQEELSPRALLLSATQLIKEKNVDKAVLLLQSYLSNFAGSQIDAEIPLALAQLNLRRTSANNLGTGSPQPKNALNVAQMLENILPQHLIHSPGVLSTRIALYLLASSGENAVQTRPDSMKQIVNCIESTLHYYEELGEQNEIYSHLLDNCAAFLLQQGEAKLAAELLEKQLARLESNICQEKQNSLIKQVLVARLVRAYAQFDRPKAEQTCKSLQAKESLSEADVDTLETTFLYGAKSLKRLGKPSEPTDTSDKGKSKRSQIKKSISDIPSSEDPGAQPVISRPKRKKRKVRLPKNYQPGVMPDPNRWLPRRERTHYRGKRRDKRFAPTRGPQGQITGESEWDAAIRSPKVKIPEDGSAGSTPKQMSNTAKQQQKKGRKKGR</sequence>
<comment type="function">
    <text evidence="1 2">Component of the signal recognition particle (SRP) complex, a ribonucleoprotein complex that mediates the cotranslational targeting of secretory and membrane proteins to the endoplasmic reticulum (ER) (By similarity). The SRP complex interacts with the signal sequence in nascent secretory and membrane proteins and directs them to the membrane of the ER (By similarity). The SRP complex targets the ribosome-nascent chain complex to the SRP receptor (SR), which is anchored in the ER, where SR compaction and GTPase rearrangement drive cotranslational protein translocation into the ER (By similarity). Binds the signal recognition particle RNA (7SL RNA) in presence of SRP68 (By similarity). Can bind 7SL RNA with low affinity (By similarity). The SRP complex possibly participates in the elongation arrest function (By similarity).</text>
</comment>
<comment type="subunit">
    <text evidence="2">Component of a signal recognition particle (SRP) complex that consists of a 7SL RNA molecule of 300 nucleotides and six protein subunits: SRP72, SRP68, SRP54, SRP19, SRP14 and SRP9.</text>
</comment>
<comment type="subcellular location">
    <subcellularLocation>
        <location evidence="1">Cytoplasm</location>
    </subcellularLocation>
    <subcellularLocation>
        <location evidence="1">Endoplasmic reticulum</location>
    </subcellularLocation>
</comment>
<comment type="similarity">
    <text evidence="4">Belongs to the SRP72 family.</text>
</comment>
<dbReference type="EMBL" id="L32975">
    <property type="protein sequence ID" value="AAA69689.1"/>
    <property type="molecule type" value="Genomic_DNA"/>
</dbReference>
<dbReference type="SMR" id="P49965"/>
<dbReference type="FunCoup" id="P49965">
    <property type="interactions" value="1219"/>
</dbReference>
<dbReference type="STRING" id="6183.P49965"/>
<dbReference type="eggNOG" id="KOG2376">
    <property type="taxonomic scope" value="Eukaryota"/>
</dbReference>
<dbReference type="HOGENOM" id="CLU_061313_0_0_1"/>
<dbReference type="InParanoid" id="P49965"/>
<dbReference type="Proteomes" id="UP000008854">
    <property type="component" value="Unassembled WGS sequence"/>
</dbReference>
<dbReference type="GO" id="GO:0005783">
    <property type="term" value="C:endoplasmic reticulum"/>
    <property type="evidence" value="ECO:0007669"/>
    <property type="project" value="UniProtKB-SubCell"/>
</dbReference>
<dbReference type="GO" id="GO:0005786">
    <property type="term" value="C:signal recognition particle, endoplasmic reticulum targeting"/>
    <property type="evidence" value="ECO:0007669"/>
    <property type="project" value="UniProtKB-KW"/>
</dbReference>
<dbReference type="GO" id="GO:0008312">
    <property type="term" value="F:7S RNA binding"/>
    <property type="evidence" value="ECO:0007669"/>
    <property type="project" value="InterPro"/>
</dbReference>
<dbReference type="GO" id="GO:0043022">
    <property type="term" value="F:ribosome binding"/>
    <property type="evidence" value="ECO:0007669"/>
    <property type="project" value="TreeGrafter"/>
</dbReference>
<dbReference type="GO" id="GO:0006614">
    <property type="term" value="P:SRP-dependent cotranslational protein targeting to membrane"/>
    <property type="evidence" value="ECO:0007669"/>
    <property type="project" value="InterPro"/>
</dbReference>
<dbReference type="Gene3D" id="1.25.40.10">
    <property type="entry name" value="Tetratricopeptide repeat domain"/>
    <property type="match status" value="1"/>
</dbReference>
<dbReference type="InterPro" id="IPR013699">
    <property type="entry name" value="Signal_recog_part_SRP72_RNA-bd"/>
</dbReference>
<dbReference type="InterPro" id="IPR026270">
    <property type="entry name" value="SRP72"/>
</dbReference>
<dbReference type="InterPro" id="IPR031545">
    <property type="entry name" value="SRP72_TPR-like"/>
</dbReference>
<dbReference type="InterPro" id="IPR011990">
    <property type="entry name" value="TPR-like_helical_dom_sf"/>
</dbReference>
<dbReference type="InterPro" id="IPR019734">
    <property type="entry name" value="TPR_rpt"/>
</dbReference>
<dbReference type="PANTHER" id="PTHR14094">
    <property type="entry name" value="SIGNAL RECOGNITION PARTICLE 72"/>
    <property type="match status" value="1"/>
</dbReference>
<dbReference type="PANTHER" id="PTHR14094:SF9">
    <property type="entry name" value="SIGNAL RECOGNITION PARTICLE SUBUNIT SRP72"/>
    <property type="match status" value="1"/>
</dbReference>
<dbReference type="Pfam" id="PF08492">
    <property type="entry name" value="SRP72"/>
    <property type="match status" value="1"/>
</dbReference>
<dbReference type="Pfam" id="PF17004">
    <property type="entry name" value="SRP_TPR_like"/>
    <property type="match status" value="1"/>
</dbReference>
<dbReference type="PIRSF" id="PIRSF038922">
    <property type="entry name" value="SRP72"/>
    <property type="match status" value="1"/>
</dbReference>
<dbReference type="SMART" id="SM00028">
    <property type="entry name" value="TPR"/>
    <property type="match status" value="4"/>
</dbReference>
<dbReference type="SUPFAM" id="SSF48452">
    <property type="entry name" value="TPR-like"/>
    <property type="match status" value="2"/>
</dbReference>
<proteinExistence type="inferred from homology"/>
<reference key="1">
    <citation type="journal article" date="1995" name="Parasitol. Res.">
        <title>Cloning of a signal-recognition-particle subunit of Schistosoma mansoni.</title>
        <authorList>
            <person name="McNair A."/>
            <person name="Zemzoumi K."/>
            <person name="Lutcke H."/>
            <person name="Guillerm C."/>
            <person name="Boitelle A."/>
            <person name="Capron A."/>
            <person name="Dissous C."/>
        </authorList>
    </citation>
    <scope>NUCLEOTIDE SEQUENCE [GENOMIC DNA]</scope>
</reference>
<feature type="chain" id="PRO_0000135236" description="Signal recognition particle subunit SRP72">
    <location>
        <begin position="1"/>
        <end position="707"/>
    </location>
</feature>
<feature type="region of interest" description="Disordered" evidence="3">
    <location>
        <begin position="564"/>
        <end position="707"/>
    </location>
</feature>
<feature type="compositionally biased region" description="Basic residues" evidence="3">
    <location>
        <begin position="608"/>
        <end position="618"/>
    </location>
</feature>
<feature type="compositionally biased region" description="Basic residues" evidence="3">
    <location>
        <begin position="638"/>
        <end position="649"/>
    </location>
</feature>
<feature type="compositionally biased region" description="Polar residues" evidence="3">
    <location>
        <begin position="684"/>
        <end position="695"/>
    </location>
</feature>
<feature type="compositionally biased region" description="Basic residues" evidence="3">
    <location>
        <begin position="698"/>
        <end position="707"/>
    </location>
</feature>
<gene>
    <name type="primary">SRP72</name>
</gene>